<feature type="signal peptide" evidence="1">
    <location>
        <begin position="1"/>
        <end position="33"/>
    </location>
</feature>
<feature type="chain" id="PRO_5006752482" description="Protein borderless" evidence="1">
    <location>
        <begin position="34"/>
        <end position="719"/>
    </location>
</feature>
<feature type="topological domain" description="Extracellular" evidence="6">
    <location>
        <begin position="34"/>
        <end position="650"/>
    </location>
</feature>
<feature type="transmembrane region" description="Helical" evidence="1">
    <location>
        <begin position="651"/>
        <end position="671"/>
    </location>
</feature>
<feature type="topological domain" description="Cytoplasmic" evidence="6">
    <location>
        <begin position="672"/>
        <end position="719"/>
    </location>
</feature>
<feature type="domain" description="Ig-like 1" evidence="2">
    <location>
        <begin position="40"/>
        <end position="128"/>
    </location>
</feature>
<feature type="domain" description="Ig-like 2" evidence="2">
    <location>
        <begin position="134"/>
        <end position="241"/>
    </location>
</feature>
<feature type="domain" description="Ig-like 3" evidence="2">
    <location>
        <begin position="246"/>
        <end position="334"/>
    </location>
</feature>
<feature type="domain" description="Ig-like 4" evidence="2">
    <location>
        <begin position="341"/>
        <end position="429"/>
    </location>
</feature>
<feature type="domain" description="Fibronectin type-III 1" evidence="3">
    <location>
        <begin position="434"/>
        <end position="527"/>
    </location>
</feature>
<feature type="domain" description="Fibronectin type-III 2" evidence="3">
    <location>
        <begin position="555"/>
        <end position="646"/>
    </location>
</feature>
<feature type="region of interest" description="Disordered" evidence="4">
    <location>
        <begin position="685"/>
        <end position="719"/>
    </location>
</feature>
<feature type="compositionally biased region" description="Acidic residues" evidence="4">
    <location>
        <begin position="688"/>
        <end position="704"/>
    </location>
</feature>
<feature type="compositionally biased region" description="Basic and acidic residues" evidence="4">
    <location>
        <begin position="705"/>
        <end position="719"/>
    </location>
</feature>
<feature type="disulfide bond" evidence="2">
    <location>
        <begin position="55"/>
        <end position="125"/>
    </location>
</feature>
<feature type="disulfide bond" evidence="2">
    <location>
        <begin position="172"/>
        <end position="224"/>
    </location>
</feature>
<feature type="disulfide bond" evidence="2">
    <location>
        <begin position="267"/>
        <end position="318"/>
    </location>
</feature>
<feature type="disulfide bond" evidence="2">
    <location>
        <begin position="363"/>
        <end position="413"/>
    </location>
</feature>
<keyword id="KW-0130">Cell adhesion</keyword>
<keyword id="KW-1003">Cell membrane</keyword>
<keyword id="KW-0966">Cell projection</keyword>
<keyword id="KW-1015">Disulfide bond</keyword>
<keyword id="KW-0393">Immunoglobulin domain</keyword>
<keyword id="KW-0472">Membrane</keyword>
<keyword id="KW-0524">Neurogenesis</keyword>
<keyword id="KW-1185">Reference proteome</keyword>
<keyword id="KW-0677">Repeat</keyword>
<keyword id="KW-0732">Signal</keyword>
<keyword id="KW-0812">Transmembrane</keyword>
<keyword id="KW-1133">Transmembrane helix</keyword>
<accession>Q9U4G1</accession>
<accession>C0PTX2</accession>
<accession>Q95U86</accession>
<accession>Q9VQY3</accession>
<sequence length="719" mass="81213">MPAKRSRTFRQSGSALLALLAIILLMNISCTSAARDHRRQTNLEAKVGSHVVFNCYIDFPFDAPIPYLVHWTKDNKKIFTWYEQETSTSELFNGRLHLVENHPEFGRASVNLTAIRESDQGWYHCQVSFPNRSPSVRNNGTAYHLAVQGGSLIRIPPVNQTIREGQTAFFHCVMKHPENSQASWYKDGVLLQEVQDLVRRFYMGPDGSLSIDPTMMSDLGEYECKVRNSDGELQTAKAFLNIQYKAKVIYAPPEVFLPYGQPAVLDCHFRANPPLKNLRWEKDGLLFDSYNVPGVFYKMNGSLFFAKVDENHAGSYTCTPYNDLGTDGPSPVISVIVLRPPIFSVTPKAIYIQKLGEAAELPCEAIDRDGNNRPSIIWGRKDGQPLPADRFSLSGGNLTITGLVEGDRGIYECSATNEAATITAEAELMIENIAPRAPYNLTANSTETCITIRWQPGYLRPNLEYTVWYRLMEAPEWRTLRVLDKKVMEATVQHLQPGKEYEFMVLSQDKYGDGMFSKQFRFQTLPSPIRADDFDAQQLQHDLGQVTAPAGGLGAPWNLTAISNQQGWLLHWEHPVQGLEGLRLYAVRWWKEPEHFLIGHAETFDNYYQLRHLKEDTLFKVQVLAVGTETQQSVPSHELLIDVPSQRKVRALIIGSSVGVIFLLCALCAFLYVKRSCLRHLFAKDSSASEDEDTAESGDCDSDEQDQRDRDSIKIRQST</sequence>
<reference evidence="11" key="1">
    <citation type="journal article" date="2000" name="Science">
        <title>The genome sequence of Drosophila melanogaster.</title>
        <authorList>
            <person name="Adams M.D."/>
            <person name="Celniker S.E."/>
            <person name="Holt R.A."/>
            <person name="Evans C.A."/>
            <person name="Gocayne J.D."/>
            <person name="Amanatides P.G."/>
            <person name="Scherer S.E."/>
            <person name="Li P.W."/>
            <person name="Hoskins R.A."/>
            <person name="Galle R.F."/>
            <person name="George R.A."/>
            <person name="Lewis S.E."/>
            <person name="Richards S."/>
            <person name="Ashburner M."/>
            <person name="Henderson S.N."/>
            <person name="Sutton G.G."/>
            <person name="Wortman J.R."/>
            <person name="Yandell M.D."/>
            <person name="Zhang Q."/>
            <person name="Chen L.X."/>
            <person name="Brandon R.C."/>
            <person name="Rogers Y.-H.C."/>
            <person name="Blazej R.G."/>
            <person name="Champe M."/>
            <person name="Pfeiffer B.D."/>
            <person name="Wan K.H."/>
            <person name="Doyle C."/>
            <person name="Baxter E.G."/>
            <person name="Helt G."/>
            <person name="Nelson C.R."/>
            <person name="Miklos G.L.G."/>
            <person name="Abril J.F."/>
            <person name="Agbayani A."/>
            <person name="An H.-J."/>
            <person name="Andrews-Pfannkoch C."/>
            <person name="Baldwin D."/>
            <person name="Ballew R.M."/>
            <person name="Basu A."/>
            <person name="Baxendale J."/>
            <person name="Bayraktaroglu L."/>
            <person name="Beasley E.M."/>
            <person name="Beeson K.Y."/>
            <person name="Benos P.V."/>
            <person name="Berman B.P."/>
            <person name="Bhandari D."/>
            <person name="Bolshakov S."/>
            <person name="Borkova D."/>
            <person name="Botchan M.R."/>
            <person name="Bouck J."/>
            <person name="Brokstein P."/>
            <person name="Brottier P."/>
            <person name="Burtis K.C."/>
            <person name="Busam D.A."/>
            <person name="Butler H."/>
            <person name="Cadieu E."/>
            <person name="Center A."/>
            <person name="Chandra I."/>
            <person name="Cherry J.M."/>
            <person name="Cawley S."/>
            <person name="Dahlke C."/>
            <person name="Davenport L.B."/>
            <person name="Davies P."/>
            <person name="de Pablos B."/>
            <person name="Delcher A."/>
            <person name="Deng Z."/>
            <person name="Mays A.D."/>
            <person name="Dew I."/>
            <person name="Dietz S.M."/>
            <person name="Dodson K."/>
            <person name="Doup L.E."/>
            <person name="Downes M."/>
            <person name="Dugan-Rocha S."/>
            <person name="Dunkov B.C."/>
            <person name="Dunn P."/>
            <person name="Durbin K.J."/>
            <person name="Evangelista C.C."/>
            <person name="Ferraz C."/>
            <person name="Ferriera S."/>
            <person name="Fleischmann W."/>
            <person name="Fosler C."/>
            <person name="Gabrielian A.E."/>
            <person name="Garg N.S."/>
            <person name="Gelbart W.M."/>
            <person name="Glasser K."/>
            <person name="Glodek A."/>
            <person name="Gong F."/>
            <person name="Gorrell J.H."/>
            <person name="Gu Z."/>
            <person name="Guan P."/>
            <person name="Harris M."/>
            <person name="Harris N.L."/>
            <person name="Harvey D.A."/>
            <person name="Heiman T.J."/>
            <person name="Hernandez J.R."/>
            <person name="Houck J."/>
            <person name="Hostin D."/>
            <person name="Houston K.A."/>
            <person name="Howland T.J."/>
            <person name="Wei M.-H."/>
            <person name="Ibegwam C."/>
            <person name="Jalali M."/>
            <person name="Kalush F."/>
            <person name="Karpen G.H."/>
            <person name="Ke Z."/>
            <person name="Kennison J.A."/>
            <person name="Ketchum K.A."/>
            <person name="Kimmel B.E."/>
            <person name="Kodira C.D."/>
            <person name="Kraft C.L."/>
            <person name="Kravitz S."/>
            <person name="Kulp D."/>
            <person name="Lai Z."/>
            <person name="Lasko P."/>
            <person name="Lei Y."/>
            <person name="Levitsky A.A."/>
            <person name="Li J.H."/>
            <person name="Li Z."/>
            <person name="Liang Y."/>
            <person name="Lin X."/>
            <person name="Liu X."/>
            <person name="Mattei B."/>
            <person name="McIntosh T.C."/>
            <person name="McLeod M.P."/>
            <person name="McPherson D."/>
            <person name="Merkulov G."/>
            <person name="Milshina N.V."/>
            <person name="Mobarry C."/>
            <person name="Morris J."/>
            <person name="Moshrefi A."/>
            <person name="Mount S.M."/>
            <person name="Moy M."/>
            <person name="Murphy B."/>
            <person name="Murphy L."/>
            <person name="Muzny D.M."/>
            <person name="Nelson D.L."/>
            <person name="Nelson D.R."/>
            <person name="Nelson K.A."/>
            <person name="Nixon K."/>
            <person name="Nusskern D.R."/>
            <person name="Pacleb J.M."/>
            <person name="Palazzolo M."/>
            <person name="Pittman G.S."/>
            <person name="Pan S."/>
            <person name="Pollard J."/>
            <person name="Puri V."/>
            <person name="Reese M.G."/>
            <person name="Reinert K."/>
            <person name="Remington K."/>
            <person name="Saunders R.D.C."/>
            <person name="Scheeler F."/>
            <person name="Shen H."/>
            <person name="Shue B.C."/>
            <person name="Siden-Kiamos I."/>
            <person name="Simpson M."/>
            <person name="Skupski M.P."/>
            <person name="Smith T.J."/>
            <person name="Spier E."/>
            <person name="Spradling A.C."/>
            <person name="Stapleton M."/>
            <person name="Strong R."/>
            <person name="Sun E."/>
            <person name="Svirskas R."/>
            <person name="Tector C."/>
            <person name="Turner R."/>
            <person name="Venter E."/>
            <person name="Wang A.H."/>
            <person name="Wang X."/>
            <person name="Wang Z.-Y."/>
            <person name="Wassarman D.A."/>
            <person name="Weinstock G.M."/>
            <person name="Weissenbach J."/>
            <person name="Williams S.M."/>
            <person name="Woodage T."/>
            <person name="Worley K.C."/>
            <person name="Wu D."/>
            <person name="Yang S."/>
            <person name="Yao Q.A."/>
            <person name="Ye J."/>
            <person name="Yeh R.-F."/>
            <person name="Zaveri J.S."/>
            <person name="Zhan M."/>
            <person name="Zhang G."/>
            <person name="Zhao Q."/>
            <person name="Zheng L."/>
            <person name="Zheng X.H."/>
            <person name="Zhong F.N."/>
            <person name="Zhong W."/>
            <person name="Zhou X."/>
            <person name="Zhu S.C."/>
            <person name="Zhu X."/>
            <person name="Smith H.O."/>
            <person name="Gibbs R.A."/>
            <person name="Myers E.W."/>
            <person name="Rubin G.M."/>
            <person name="Venter J.C."/>
        </authorList>
    </citation>
    <scope>NUCLEOTIDE SEQUENCE [LARGE SCALE GENOMIC DNA]</scope>
    <source>
        <strain>Berkeley</strain>
    </source>
</reference>
<reference evidence="11" key="2">
    <citation type="journal article" date="2002" name="Genome Biol.">
        <title>Annotation of the Drosophila melanogaster euchromatic genome: a systematic review.</title>
        <authorList>
            <person name="Misra S."/>
            <person name="Crosby M.A."/>
            <person name="Mungall C.J."/>
            <person name="Matthews B.B."/>
            <person name="Campbell K.S."/>
            <person name="Hradecky P."/>
            <person name="Huang Y."/>
            <person name="Kaminker J.S."/>
            <person name="Millburn G.H."/>
            <person name="Prochnik S.E."/>
            <person name="Smith C.D."/>
            <person name="Tupy J.L."/>
            <person name="Whitfield E.J."/>
            <person name="Bayraktaroglu L."/>
            <person name="Berman B.P."/>
            <person name="Bettencourt B.R."/>
            <person name="Celniker S.E."/>
            <person name="de Grey A.D.N.J."/>
            <person name="Drysdale R.A."/>
            <person name="Harris N.L."/>
            <person name="Richter J."/>
            <person name="Russo S."/>
            <person name="Schroeder A.J."/>
            <person name="Shu S.Q."/>
            <person name="Stapleton M."/>
            <person name="Yamada C."/>
            <person name="Ashburner M."/>
            <person name="Gelbart W.M."/>
            <person name="Rubin G.M."/>
            <person name="Lewis S.E."/>
        </authorList>
    </citation>
    <scope>GENOME REANNOTATION</scope>
    <source>
        <strain evidence="11">Berkeley</strain>
    </source>
</reference>
<reference evidence="7" key="3">
    <citation type="journal article" date="2000" name="Science">
        <title>A Drosophila complementary DNA resource.</title>
        <authorList>
            <person name="Rubin G.M."/>
            <person name="Hong L."/>
            <person name="Brokstein P."/>
            <person name="Evans-Holm M."/>
            <person name="Frise E."/>
            <person name="Stapleton M."/>
            <person name="Harvey D.A."/>
        </authorList>
    </citation>
    <scope>NUCLEOTIDE SEQUENCE [LARGE SCALE MRNA]</scope>
</reference>
<reference evidence="9" key="4">
    <citation type="submission" date="2009-03" db="EMBL/GenBank/DDBJ databases">
        <authorList>
            <person name="Carlson J."/>
            <person name="Booth B."/>
            <person name="Frise E."/>
            <person name="Park S."/>
            <person name="Wan K."/>
            <person name="Yu C."/>
            <person name="Celniker S."/>
        </authorList>
    </citation>
    <scope>NUCLEOTIDE SEQUENCE [LARGE SCALE MRNA] OF 34-650</scope>
</reference>
<reference evidence="8" key="5">
    <citation type="journal article" date="2002" name="Genome Biol.">
        <title>A Drosophila full-length cDNA resource.</title>
        <authorList>
            <person name="Stapleton M."/>
            <person name="Carlson J.W."/>
            <person name="Brokstein P."/>
            <person name="Yu C."/>
            <person name="Champe M."/>
            <person name="George R.A."/>
            <person name="Guarin H."/>
            <person name="Kronmiller B."/>
            <person name="Pacleb J.M."/>
            <person name="Park S."/>
            <person name="Wan K.H."/>
            <person name="Rubin G.M."/>
            <person name="Celniker S.E."/>
        </authorList>
    </citation>
    <scope>NUCLEOTIDE SEQUENCE [LARGE SCALE MRNA] OF 289-719</scope>
    <source>
        <strain>Berkeley</strain>
        <tissue>Head</tissue>
    </source>
</reference>
<reference evidence="6" key="6">
    <citation type="journal article" date="2013" name="J. Neurosci.">
        <title>Visual circuit assembly requires fine tuning of the novel Ig transmembrane protein Borderless.</title>
        <authorList>
            <person name="Cameron S."/>
            <person name="Chang W.T."/>
            <person name="Chen Y."/>
            <person name="Zhou Y."/>
            <person name="Taran S."/>
            <person name="Rao Y."/>
        </authorList>
    </citation>
    <scope>FUNCTION</scope>
    <scope>INTERACTION WITH TUTL</scope>
    <scope>SUBCELLULAR LOCATION</scope>
    <scope>TISSUE SPECIFICITY</scope>
    <scope>DEVELOPMENTAL STAGE</scope>
    <scope>DISRUPTION PHENOTYPE</scope>
</reference>
<gene>
    <name evidence="10" type="primary">bdl</name>
    <name evidence="10" type="ORF">CG16857</name>
</gene>
<protein>
    <recommendedName>
        <fullName evidence="6">Protein borderless</fullName>
    </recommendedName>
</protein>
<name>BDL_DROME</name>
<evidence type="ECO:0000255" key="1"/>
<evidence type="ECO:0000255" key="2">
    <source>
        <dbReference type="PROSITE-ProRule" id="PRU00114"/>
    </source>
</evidence>
<evidence type="ECO:0000255" key="3">
    <source>
        <dbReference type="PROSITE-ProRule" id="PRU00316"/>
    </source>
</evidence>
<evidence type="ECO:0000256" key="4">
    <source>
        <dbReference type="SAM" id="MobiDB-lite"/>
    </source>
</evidence>
<evidence type="ECO:0000269" key="5">
    <source>
    </source>
</evidence>
<evidence type="ECO:0000305" key="6"/>
<evidence type="ECO:0000312" key="7">
    <source>
        <dbReference type="EMBL" id="AAD55430.1"/>
    </source>
</evidence>
<evidence type="ECO:0000312" key="8">
    <source>
        <dbReference type="EMBL" id="AAL13474.1"/>
    </source>
</evidence>
<evidence type="ECO:0000312" key="9">
    <source>
        <dbReference type="EMBL" id="ACN58580.1"/>
    </source>
</evidence>
<evidence type="ECO:0000312" key="10">
    <source>
        <dbReference type="FlyBase" id="FBgn0028482"/>
    </source>
</evidence>
<evidence type="ECO:0000312" key="11">
    <source>
        <dbReference type="Proteomes" id="UP000000803"/>
    </source>
</evidence>
<dbReference type="EMBL" id="AE014134">
    <property type="protein sequence ID" value="AAF51028.2"/>
    <property type="molecule type" value="Genomic_DNA"/>
</dbReference>
<dbReference type="EMBL" id="AF181644">
    <property type="protein sequence ID" value="AAD55430.1"/>
    <property type="molecule type" value="mRNA"/>
</dbReference>
<dbReference type="EMBL" id="BT071817">
    <property type="protein sequence ID" value="ACN58580.1"/>
    <property type="molecule type" value="mRNA"/>
</dbReference>
<dbReference type="EMBL" id="AY058245">
    <property type="protein sequence ID" value="AAL13474.1"/>
    <property type="status" value="ALT_INIT"/>
    <property type="molecule type" value="mRNA"/>
</dbReference>
<dbReference type="RefSeq" id="NP_608822.1">
    <property type="nucleotide sequence ID" value="NM_134978.3"/>
</dbReference>
<dbReference type="SMR" id="Q9U4G1"/>
<dbReference type="FunCoup" id="Q9U4G1">
    <property type="interactions" value="90"/>
</dbReference>
<dbReference type="STRING" id="7227.FBpp0077115"/>
<dbReference type="PaxDb" id="7227-FBpp0077115"/>
<dbReference type="EnsemblMetazoa" id="FBtr0077425">
    <property type="protein sequence ID" value="FBpp0077115"/>
    <property type="gene ID" value="FBgn0028482"/>
</dbReference>
<dbReference type="GeneID" id="33635"/>
<dbReference type="KEGG" id="dme:Dmel_CG16857"/>
<dbReference type="UCSC" id="CG16857-RA">
    <property type="organism name" value="d. melanogaster"/>
</dbReference>
<dbReference type="AGR" id="FB:FBgn0028482"/>
<dbReference type="CTD" id="33635"/>
<dbReference type="FlyBase" id="FBgn0028482">
    <property type="gene designation" value="bdl"/>
</dbReference>
<dbReference type="VEuPathDB" id="VectorBase:FBgn0028482"/>
<dbReference type="eggNOG" id="KOG3510">
    <property type="taxonomic scope" value="Eukaryota"/>
</dbReference>
<dbReference type="HOGENOM" id="CLU_008130_1_0_1"/>
<dbReference type="InParanoid" id="Q9U4G1"/>
<dbReference type="OMA" id="IPYIVHW"/>
<dbReference type="OrthoDB" id="6234674at2759"/>
<dbReference type="PhylomeDB" id="Q9U4G1"/>
<dbReference type="BioGRID-ORCS" id="33635">
    <property type="hits" value="0 hits in 3 CRISPR screens"/>
</dbReference>
<dbReference type="GenomeRNAi" id="33635"/>
<dbReference type="PRO" id="PR:Q9U4G1"/>
<dbReference type="Proteomes" id="UP000000803">
    <property type="component" value="Chromosome 2L"/>
</dbReference>
<dbReference type="Bgee" id="FBgn0028482">
    <property type="expression patterns" value="Expressed in surface associated glial cell (Drosophila) in post-embryonic organism and 100 other cell types or tissues"/>
</dbReference>
<dbReference type="GO" id="GO:0030424">
    <property type="term" value="C:axon"/>
    <property type="evidence" value="ECO:0000318"/>
    <property type="project" value="GO_Central"/>
</dbReference>
<dbReference type="GO" id="GO:0005886">
    <property type="term" value="C:plasma membrane"/>
    <property type="evidence" value="ECO:0000314"/>
    <property type="project" value="FlyBase"/>
</dbReference>
<dbReference type="GO" id="GO:0098632">
    <property type="term" value="F:cell-cell adhesion mediator activity"/>
    <property type="evidence" value="ECO:0000353"/>
    <property type="project" value="FlyBase"/>
</dbReference>
<dbReference type="GO" id="GO:0008366">
    <property type="term" value="P:axon ensheathment"/>
    <property type="evidence" value="ECO:0000315"/>
    <property type="project" value="FlyBase"/>
</dbReference>
<dbReference type="GO" id="GO:0007411">
    <property type="term" value="P:axon guidance"/>
    <property type="evidence" value="ECO:0000318"/>
    <property type="project" value="GO_Central"/>
</dbReference>
<dbReference type="GO" id="GO:0098930">
    <property type="term" value="P:axonal transport"/>
    <property type="evidence" value="ECO:0000315"/>
    <property type="project" value="FlyBase"/>
</dbReference>
<dbReference type="GO" id="GO:0070593">
    <property type="term" value="P:dendrite self-avoidance"/>
    <property type="evidence" value="ECO:0000318"/>
    <property type="project" value="GO_Central"/>
</dbReference>
<dbReference type="GO" id="GO:0042065">
    <property type="term" value="P:glial cell growth"/>
    <property type="evidence" value="ECO:0000315"/>
    <property type="project" value="FlyBase"/>
</dbReference>
<dbReference type="GO" id="GO:0007156">
    <property type="term" value="P:homophilic cell adhesion via plasma membrane adhesion molecules"/>
    <property type="evidence" value="ECO:0000315"/>
    <property type="project" value="FlyBase"/>
</dbReference>
<dbReference type="GO" id="GO:0007158">
    <property type="term" value="P:neuron cell-cell adhesion"/>
    <property type="evidence" value="ECO:0000315"/>
    <property type="project" value="FlyBase"/>
</dbReference>
<dbReference type="GO" id="GO:0045467">
    <property type="term" value="P:R7 cell development"/>
    <property type="evidence" value="ECO:0000315"/>
    <property type="project" value="FlyBase"/>
</dbReference>
<dbReference type="GO" id="GO:0009416">
    <property type="term" value="P:response to light stimulus"/>
    <property type="evidence" value="ECO:0000315"/>
    <property type="project" value="FlyBase"/>
</dbReference>
<dbReference type="CDD" id="cd00063">
    <property type="entry name" value="FN3"/>
    <property type="match status" value="2"/>
</dbReference>
<dbReference type="CDD" id="cd00096">
    <property type="entry name" value="Ig"/>
    <property type="match status" value="1"/>
</dbReference>
<dbReference type="FunFam" id="2.60.40.10:FF:002166">
    <property type="entry name" value="Protein borderless"/>
    <property type="match status" value="1"/>
</dbReference>
<dbReference type="FunFam" id="2.60.40.10:FF:000830">
    <property type="entry name" value="Turtle, isoform F"/>
    <property type="match status" value="1"/>
</dbReference>
<dbReference type="FunFam" id="2.60.40.10:FF:001453">
    <property type="entry name" value="Turtle, isoform G"/>
    <property type="match status" value="1"/>
</dbReference>
<dbReference type="FunFam" id="2.60.40.10:FF:001149">
    <property type="entry name" value="Turtle, isoform H"/>
    <property type="match status" value="1"/>
</dbReference>
<dbReference type="FunFam" id="2.60.40.10:FF:001842">
    <property type="entry name" value="Uncharacterized protein, isoform B"/>
    <property type="match status" value="1"/>
</dbReference>
<dbReference type="Gene3D" id="2.60.40.10">
    <property type="entry name" value="Immunoglobulins"/>
    <property type="match status" value="5"/>
</dbReference>
<dbReference type="InterPro" id="IPR003961">
    <property type="entry name" value="FN3_dom"/>
</dbReference>
<dbReference type="InterPro" id="IPR036116">
    <property type="entry name" value="FN3_sf"/>
</dbReference>
<dbReference type="InterPro" id="IPR007110">
    <property type="entry name" value="Ig-like_dom"/>
</dbReference>
<dbReference type="InterPro" id="IPR036179">
    <property type="entry name" value="Ig-like_dom_sf"/>
</dbReference>
<dbReference type="InterPro" id="IPR013783">
    <property type="entry name" value="Ig-like_fold"/>
</dbReference>
<dbReference type="InterPro" id="IPR013098">
    <property type="entry name" value="Ig_I-set"/>
</dbReference>
<dbReference type="InterPro" id="IPR003599">
    <property type="entry name" value="Ig_sub"/>
</dbReference>
<dbReference type="InterPro" id="IPR003598">
    <property type="entry name" value="Ig_sub2"/>
</dbReference>
<dbReference type="InterPro" id="IPR013106">
    <property type="entry name" value="Ig_V-set"/>
</dbReference>
<dbReference type="PANTHER" id="PTHR44170:SF6">
    <property type="entry name" value="CONTACTIN"/>
    <property type="match status" value="1"/>
</dbReference>
<dbReference type="PANTHER" id="PTHR44170">
    <property type="entry name" value="PROTEIN SIDEKICK"/>
    <property type="match status" value="1"/>
</dbReference>
<dbReference type="Pfam" id="PF00041">
    <property type="entry name" value="fn3"/>
    <property type="match status" value="2"/>
</dbReference>
<dbReference type="Pfam" id="PF07679">
    <property type="entry name" value="I-set"/>
    <property type="match status" value="1"/>
</dbReference>
<dbReference type="Pfam" id="PF13927">
    <property type="entry name" value="Ig_3"/>
    <property type="match status" value="2"/>
</dbReference>
<dbReference type="Pfam" id="PF07686">
    <property type="entry name" value="V-set"/>
    <property type="match status" value="1"/>
</dbReference>
<dbReference type="SMART" id="SM00060">
    <property type="entry name" value="FN3"/>
    <property type="match status" value="2"/>
</dbReference>
<dbReference type="SMART" id="SM00409">
    <property type="entry name" value="IG"/>
    <property type="match status" value="4"/>
</dbReference>
<dbReference type="SMART" id="SM00408">
    <property type="entry name" value="IGc2"/>
    <property type="match status" value="4"/>
</dbReference>
<dbReference type="SUPFAM" id="SSF49265">
    <property type="entry name" value="Fibronectin type III"/>
    <property type="match status" value="1"/>
</dbReference>
<dbReference type="SUPFAM" id="SSF48726">
    <property type="entry name" value="Immunoglobulin"/>
    <property type="match status" value="4"/>
</dbReference>
<dbReference type="PROSITE" id="PS50853">
    <property type="entry name" value="FN3"/>
    <property type="match status" value="2"/>
</dbReference>
<dbReference type="PROSITE" id="PS50835">
    <property type="entry name" value="IG_LIKE"/>
    <property type="match status" value="4"/>
</dbReference>
<proteinExistence type="evidence at protein level"/>
<comment type="function">
    <text evidence="5">In the developing eye, has a role in axonal targeting of the R7 photoreceptor where it functions together with tutl. Probably mediates homotypic cell adhesion; the effect is inhibited by Lar.</text>
</comment>
<comment type="subunit">
    <text evidence="5">Interacts with tutl.</text>
</comment>
<comment type="subcellular location">
    <subcellularLocation>
        <location evidence="6">Cell membrane</location>
        <topology evidence="1">Single-pass membrane protein</topology>
    </subcellularLocation>
    <subcellularLocation>
        <location evidence="5">Cell projection</location>
        <location evidence="5">Axon</location>
    </subcellularLocation>
</comment>
<comment type="tissue specificity">
    <text evidence="5">In the visual system, expressed in lamina and medulla (at protein level).</text>
</comment>
<comment type="developmental stage">
    <text evidence="5">During the mid-pupal stage, strongly expressed in the lamina, medulla and inner optic lobe of the developing eye. Specifically detected in R7 and R8 axonal terminals in the medulla.</text>
</comment>
<comment type="disruption phenotype">
    <text evidence="5">In the eye, axonal targeting of the R1-R6, R7 and R8 cells appears to be normal. Double knockouts of bdl and tutl rescue the R7 axonal tiling defect of tutl mutants. Double knockouts of bdl and Lar partly rescue the R7 axonal targeting defect of Lar mutants.</text>
</comment>
<comment type="similarity">
    <text evidence="6">Belongs to the immunoglobulin superfamily.</text>
</comment>
<comment type="sequence caution" evidence="6">
    <conflict type="erroneous initiation">
        <sequence resource="EMBL-CDS" id="AAL13474"/>
    </conflict>
    <text>Truncated N-terminus.</text>
</comment>
<organism evidence="11">
    <name type="scientific">Drosophila melanogaster</name>
    <name type="common">Fruit fly</name>
    <dbReference type="NCBI Taxonomy" id="7227"/>
    <lineage>
        <taxon>Eukaryota</taxon>
        <taxon>Metazoa</taxon>
        <taxon>Ecdysozoa</taxon>
        <taxon>Arthropoda</taxon>
        <taxon>Hexapoda</taxon>
        <taxon>Insecta</taxon>
        <taxon>Pterygota</taxon>
        <taxon>Neoptera</taxon>
        <taxon>Endopterygota</taxon>
        <taxon>Diptera</taxon>
        <taxon>Brachycera</taxon>
        <taxon>Muscomorpha</taxon>
        <taxon>Ephydroidea</taxon>
        <taxon>Drosophilidae</taxon>
        <taxon>Drosophila</taxon>
        <taxon>Sophophora</taxon>
    </lineage>
</organism>